<sequence length="510" mass="57170">MVLLAAAVCTKAGKAIVSRQFVEMTRTRIEGLLAAFPKLMNTGKQHTFVETESVRYVYQPMEKLYMVLITTKNSNILEDLETLRLFSRVIPEYCRALEENEISEHCFDLIFAFDEIVALGYRENVNLAQIRTFTEMDSHEEKVFRAVRETQEREAKAEMRRKAKELQQARRDAERLGKKAPGFGGFGSSAVSGGTTAAMITETIIETEKPKVAPAPSRPSGPSKALKLGAKGKEVDNFVDKLKSEGENIMTSVGKRSTEAAKVLAPPINMESVHMKIEEKISLTCGRDGGLQNMELHGMIMLHISDEKFARIRLHVENEDKRGVQLQTHPNVDKKLFTAESQIGLKNPEKSFPINSDVGVLKWRLQTTEESFIPLTINCWPSESGNSCDVNIEYELQEESLELNDVVIMIPLPSGVGAPVIGEIDGEYRHDSRRNLLEWCLPVIDAKNKSGSLEFSIAGQPNDFFPVQVSFISKKNYCNIQVTKVTQVDGNSPVRFSTETTFLVDKYEIL</sequence>
<gene>
    <name type="primary">ARCN1</name>
    <name type="synonym">COPD</name>
    <name type="ORF">RCJMB04_7j3</name>
</gene>
<feature type="chain" id="PRO_0000193845" description="Coatomer subunit delta">
    <location>
        <begin position="1"/>
        <end position="510"/>
    </location>
</feature>
<feature type="domain" description="MHD" evidence="2">
    <location>
        <begin position="270"/>
        <end position="510"/>
    </location>
</feature>
<organism>
    <name type="scientific">Gallus gallus</name>
    <name type="common">Chicken</name>
    <dbReference type="NCBI Taxonomy" id="9031"/>
    <lineage>
        <taxon>Eukaryota</taxon>
        <taxon>Metazoa</taxon>
        <taxon>Chordata</taxon>
        <taxon>Craniata</taxon>
        <taxon>Vertebrata</taxon>
        <taxon>Euteleostomi</taxon>
        <taxon>Archelosauria</taxon>
        <taxon>Archosauria</taxon>
        <taxon>Dinosauria</taxon>
        <taxon>Saurischia</taxon>
        <taxon>Theropoda</taxon>
        <taxon>Coelurosauria</taxon>
        <taxon>Aves</taxon>
        <taxon>Neognathae</taxon>
        <taxon>Galloanserae</taxon>
        <taxon>Galliformes</taxon>
        <taxon>Phasianidae</taxon>
        <taxon>Phasianinae</taxon>
        <taxon>Gallus</taxon>
    </lineage>
</organism>
<comment type="function">
    <text evidence="1">The coatomer is a cytosolic protein complex that binds to dilysine motifs and reversibly associates with Golgi non-clathrin-coated vesicles, which further mediate biosynthetic protein transport from the ER, via the Golgi up to the trans Golgi network. Coatomer complex is required for budding from Golgi membranes, and is essential for the retrograde Golgi-to-ER transport of dilysine-tagged proteins. In mammals, the coatomer can only be recruited by membranes associated to ADP-ribosylation factors (ARFs), which are small GTP-binding proteins; the complex also influences the Golgi structural integrity, as well as the processing, activity, and endocytic recycling of LDL receptors (By similarity).</text>
</comment>
<comment type="subunit">
    <text evidence="1">Oligomeric complex that consists of at least the alpha, beta, beta', gamma, delta, epsilon and zeta subunits.</text>
</comment>
<comment type="subcellular location">
    <subcellularLocation>
        <location evidence="1">Cytoplasm</location>
    </subcellularLocation>
    <subcellularLocation>
        <location evidence="1">Golgi apparatus membrane</location>
        <topology evidence="1">Peripheral membrane protein</topology>
        <orientation evidence="1">Cytoplasmic side</orientation>
    </subcellularLocation>
    <subcellularLocation>
        <location evidence="1">Cytoplasmic vesicle</location>
        <location evidence="1">COPI-coated vesicle membrane</location>
        <topology evidence="1">Peripheral membrane protein</topology>
        <orientation evidence="1">Cytoplasmic side</orientation>
    </subcellularLocation>
    <text evidence="1">The coatomer is cytoplasmic or polymerized on the cytoplasmic side of the Golgi, as well as on the vesicles/buds originating from it.</text>
</comment>
<comment type="similarity">
    <text evidence="3">Belongs to the adaptor complexes medium subunit family. Delta-COP subfamily.</text>
</comment>
<evidence type="ECO:0000250" key="1"/>
<evidence type="ECO:0000255" key="2">
    <source>
        <dbReference type="PROSITE-ProRule" id="PRU00404"/>
    </source>
</evidence>
<evidence type="ECO:0000305" key="3"/>
<name>COPD_CHICK</name>
<reference key="1">
    <citation type="journal article" date="2005" name="Genome Biol.">
        <title>Full-length cDNAs from chicken bursal lymphocytes to facilitate gene function analysis.</title>
        <authorList>
            <person name="Caldwell R.B."/>
            <person name="Kierzek A.M."/>
            <person name="Arakawa H."/>
            <person name="Bezzubov Y."/>
            <person name="Zaim J."/>
            <person name="Fiedler P."/>
            <person name="Kutter S."/>
            <person name="Blagodatski A."/>
            <person name="Kostovska D."/>
            <person name="Koter M."/>
            <person name="Plachy J."/>
            <person name="Carninci P."/>
            <person name="Hayashizaki Y."/>
            <person name="Buerstedde J.-M."/>
        </authorList>
    </citation>
    <scope>NUCLEOTIDE SEQUENCE [LARGE SCALE MRNA]</scope>
    <source>
        <strain>CB</strain>
        <tissue>Bursa of Fabricius</tissue>
    </source>
</reference>
<keyword id="KW-0963">Cytoplasm</keyword>
<keyword id="KW-0968">Cytoplasmic vesicle</keyword>
<keyword id="KW-0931">ER-Golgi transport</keyword>
<keyword id="KW-0333">Golgi apparatus</keyword>
<keyword id="KW-0472">Membrane</keyword>
<keyword id="KW-0653">Protein transport</keyword>
<keyword id="KW-1185">Reference proteome</keyword>
<keyword id="KW-0813">Transport</keyword>
<accession>Q5ZL57</accession>
<protein>
    <recommendedName>
        <fullName>Coatomer subunit delta</fullName>
    </recommendedName>
    <alternativeName>
        <fullName>Archain</fullName>
    </alternativeName>
    <alternativeName>
        <fullName>Delta-coat protein</fullName>
        <shortName>Delta-COP</shortName>
    </alternativeName>
</protein>
<proteinExistence type="evidence at transcript level"/>
<dbReference type="EMBL" id="AJ719877">
    <property type="protein sequence ID" value="CAG31536.1"/>
    <property type="molecule type" value="mRNA"/>
</dbReference>
<dbReference type="RefSeq" id="NP_001072967.1">
    <property type="nucleotide sequence ID" value="NM_001079499.2"/>
</dbReference>
<dbReference type="SMR" id="Q5ZL57"/>
<dbReference type="BioGRID" id="691278">
    <property type="interactions" value="2"/>
</dbReference>
<dbReference type="FunCoup" id="Q5ZL57">
    <property type="interactions" value="3091"/>
</dbReference>
<dbReference type="IntAct" id="Q5ZL57">
    <property type="interactions" value="1"/>
</dbReference>
<dbReference type="STRING" id="9031.ENSGALP00000012007"/>
<dbReference type="PaxDb" id="9031-ENSGALP00000012007"/>
<dbReference type="Ensembl" id="ENSGALT00010058028.1">
    <property type="protein sequence ID" value="ENSGALP00010035206.1"/>
    <property type="gene ID" value="ENSGALG00010023798.1"/>
</dbReference>
<dbReference type="GeneID" id="770561"/>
<dbReference type="KEGG" id="gga:770561"/>
<dbReference type="CTD" id="372"/>
<dbReference type="VEuPathDB" id="HostDB:geneid_770561"/>
<dbReference type="eggNOG" id="KOG2635">
    <property type="taxonomic scope" value="Eukaryota"/>
</dbReference>
<dbReference type="GeneTree" id="ENSGT00390000017207"/>
<dbReference type="HOGENOM" id="CLU_019988_3_0_1"/>
<dbReference type="InParanoid" id="Q5ZL57"/>
<dbReference type="OMA" id="VQFRTHP"/>
<dbReference type="OrthoDB" id="10266042at2759"/>
<dbReference type="PhylomeDB" id="Q5ZL57"/>
<dbReference type="TreeFam" id="TF105760"/>
<dbReference type="Reactome" id="R-GGA-6807878">
    <property type="pathway name" value="COPI-mediated anterograde transport"/>
</dbReference>
<dbReference type="Reactome" id="R-GGA-6811434">
    <property type="pathway name" value="COPI-dependent Golgi-to-ER retrograde traffic"/>
</dbReference>
<dbReference type="PRO" id="PR:Q5ZL57"/>
<dbReference type="Proteomes" id="UP000000539">
    <property type="component" value="Chromosome 24"/>
</dbReference>
<dbReference type="Bgee" id="ENSGALG00000007430">
    <property type="expression patterns" value="Expressed in colon and 13 other cell types or tissues"/>
</dbReference>
<dbReference type="GO" id="GO:0030126">
    <property type="term" value="C:COPI vesicle coat"/>
    <property type="evidence" value="ECO:0000318"/>
    <property type="project" value="GO_Central"/>
</dbReference>
<dbReference type="GO" id="GO:0000139">
    <property type="term" value="C:Golgi membrane"/>
    <property type="evidence" value="ECO:0007669"/>
    <property type="project" value="UniProtKB-SubCell"/>
</dbReference>
<dbReference type="GO" id="GO:0006888">
    <property type="term" value="P:endoplasmic reticulum to Golgi vesicle-mediated transport"/>
    <property type="evidence" value="ECO:0000318"/>
    <property type="project" value="GO_Central"/>
</dbReference>
<dbReference type="GO" id="GO:0051645">
    <property type="term" value="P:Golgi localization"/>
    <property type="evidence" value="ECO:0000318"/>
    <property type="project" value="GO_Central"/>
</dbReference>
<dbReference type="GO" id="GO:0015031">
    <property type="term" value="P:protein transport"/>
    <property type="evidence" value="ECO:0007669"/>
    <property type="project" value="UniProtKB-KW"/>
</dbReference>
<dbReference type="GO" id="GO:0006890">
    <property type="term" value="P:retrograde vesicle-mediated transport, Golgi to endoplasmic reticulum"/>
    <property type="evidence" value="ECO:0000318"/>
    <property type="project" value="GO_Central"/>
</dbReference>
<dbReference type="CDD" id="cd09254">
    <property type="entry name" value="AP_delta-COPI_MHD"/>
    <property type="match status" value="1"/>
</dbReference>
<dbReference type="CDD" id="cd14830">
    <property type="entry name" value="Delta_COP_N"/>
    <property type="match status" value="1"/>
</dbReference>
<dbReference type="FunFam" id="2.60.40.1170:FF:000007">
    <property type="entry name" value="Coatomer subunit delta"/>
    <property type="match status" value="1"/>
</dbReference>
<dbReference type="FunFam" id="2.60.40.1170:FF:000011">
    <property type="entry name" value="Coatomer subunit delta"/>
    <property type="match status" value="1"/>
</dbReference>
<dbReference type="FunFam" id="3.30.450.60:FF:000003">
    <property type="entry name" value="Coatomer subunit delta"/>
    <property type="match status" value="1"/>
</dbReference>
<dbReference type="Gene3D" id="3.30.450.60">
    <property type="match status" value="1"/>
</dbReference>
<dbReference type="Gene3D" id="2.60.40.1170">
    <property type="entry name" value="Mu homology domain, subdomain B"/>
    <property type="match status" value="2"/>
</dbReference>
<dbReference type="InterPro" id="IPR036168">
    <property type="entry name" value="AP2_Mu_C_sf"/>
</dbReference>
<dbReference type="InterPro" id="IPR022775">
    <property type="entry name" value="AP_mu_sigma_su"/>
</dbReference>
<dbReference type="InterPro" id="IPR027059">
    <property type="entry name" value="Coatomer_dsu"/>
</dbReference>
<dbReference type="InterPro" id="IPR011012">
    <property type="entry name" value="Longin-like_dom_sf"/>
</dbReference>
<dbReference type="InterPro" id="IPR028565">
    <property type="entry name" value="MHD"/>
</dbReference>
<dbReference type="PANTHER" id="PTHR10121">
    <property type="entry name" value="COATOMER SUBUNIT DELTA"/>
    <property type="match status" value="1"/>
</dbReference>
<dbReference type="PANTHER" id="PTHR10121:SF0">
    <property type="entry name" value="COATOMER SUBUNIT DELTA"/>
    <property type="match status" value="1"/>
</dbReference>
<dbReference type="Pfam" id="PF00928">
    <property type="entry name" value="Adap_comp_sub"/>
    <property type="match status" value="1"/>
</dbReference>
<dbReference type="Pfam" id="PF01217">
    <property type="entry name" value="Clat_adaptor_s"/>
    <property type="match status" value="1"/>
</dbReference>
<dbReference type="SUPFAM" id="SSF49447">
    <property type="entry name" value="Second domain of Mu2 adaptin subunit (ap50) of ap2 adaptor"/>
    <property type="match status" value="1"/>
</dbReference>
<dbReference type="SUPFAM" id="SSF64356">
    <property type="entry name" value="SNARE-like"/>
    <property type="match status" value="1"/>
</dbReference>
<dbReference type="PROSITE" id="PS51072">
    <property type="entry name" value="MHD"/>
    <property type="match status" value="1"/>
</dbReference>